<gene>
    <name type="primary">PAD1</name>
    <name type="ordered locus">Os09g0538200</name>
    <name type="ordered locus">LOC_Os09g36710</name>
    <name type="ORF">OsJ_028982</name>
    <name type="ORF">P0229B10.22</name>
    <name type="ORF">P0569E11.44</name>
</gene>
<accession>Q0J006</accession>
<accession>B7F989</accession>
<accession>O04861</accession>
<accession>Q69JF0</accession>
<accession>Q9LRI3</accession>
<organism>
    <name type="scientific">Oryza sativa subsp. japonica</name>
    <name type="common">Rice</name>
    <dbReference type="NCBI Taxonomy" id="39947"/>
    <lineage>
        <taxon>Eukaryota</taxon>
        <taxon>Viridiplantae</taxon>
        <taxon>Streptophyta</taxon>
        <taxon>Embryophyta</taxon>
        <taxon>Tracheophyta</taxon>
        <taxon>Spermatophyta</taxon>
        <taxon>Magnoliopsida</taxon>
        <taxon>Liliopsida</taxon>
        <taxon>Poales</taxon>
        <taxon>Poaceae</taxon>
        <taxon>BOP clade</taxon>
        <taxon>Oryzoideae</taxon>
        <taxon>Oryzeae</taxon>
        <taxon>Oryzinae</taxon>
        <taxon>Oryza</taxon>
        <taxon>Oryza sativa</taxon>
    </lineage>
</organism>
<sequence>MARYDRAITVFSPDGHLFQVEYALEAVRKGNAAVGVRGSDTVVLGVEKKSTPKLQDSRSVRKIASLDTHIALACAGLKADARVLINRARVECQSHRLTVEDAVTVEYITRYIAGLQQKYTQSGGVRPFGLSTLIVGFDPYTDKPALYQTDPSGTFSAWKANATGRNSNSMREFLEKNYKETSGKETIKLAIRALLEVVESGGKNIEIAVMTQKDGLRQLEEAEIDEYVAEIEAEKAAAEAAKKGAPKET</sequence>
<evidence type="ECO:0000250" key="1"/>
<evidence type="ECO:0000255" key="2">
    <source>
        <dbReference type="PROSITE-ProRule" id="PRU00808"/>
    </source>
</evidence>
<evidence type="ECO:0000305" key="3"/>
<feature type="chain" id="PRO_0000124163" description="Proteasome subunit alpha type-7-B">
    <location>
        <begin position="1"/>
        <end position="249"/>
    </location>
</feature>
<feature type="sequence conflict" description="In Ref. 1; BAA99540." evidence="3" ref="1">
    <location>
        <position position="85"/>
    </location>
</feature>
<protein>
    <recommendedName>
        <fullName>Proteasome subunit alpha type-7-B</fullName>
    </recommendedName>
    <alternativeName>
        <fullName>20S proteasome alpha subunit D-2</fullName>
    </alternativeName>
    <alternativeName>
        <fullName>20S proteasome subunit alpha-4-B</fullName>
    </alternativeName>
</protein>
<keyword id="KW-0963">Cytoplasm</keyword>
<keyword id="KW-0539">Nucleus</keyword>
<keyword id="KW-0647">Proteasome</keyword>
<keyword id="KW-1185">Reference proteome</keyword>
<proteinExistence type="evidence at transcript level"/>
<reference key="1">
    <citation type="journal article" date="2000" name="Gene">
        <title>Primary structural features of the 20S proteasome subunits of rice (Oryza sativa).</title>
        <authorList>
            <person name="Sassa H."/>
            <person name="Oguchi S."/>
            <person name="Inoue T."/>
            <person name="Hirano H."/>
        </authorList>
    </citation>
    <scope>NUCLEOTIDE SEQUENCE [MRNA]</scope>
    <source>
        <strain>cv. Nipponbare</strain>
    </source>
</reference>
<reference key="2">
    <citation type="journal article" date="2005" name="Nature">
        <title>The map-based sequence of the rice genome.</title>
        <authorList>
            <consortium name="International rice genome sequencing project (IRGSP)"/>
        </authorList>
    </citation>
    <scope>NUCLEOTIDE SEQUENCE [LARGE SCALE GENOMIC DNA]</scope>
    <source>
        <strain>cv. Nipponbare</strain>
    </source>
</reference>
<reference key="3">
    <citation type="journal article" date="2008" name="Nucleic Acids Res.">
        <title>The rice annotation project database (RAP-DB): 2008 update.</title>
        <authorList>
            <consortium name="The rice annotation project (RAP)"/>
        </authorList>
    </citation>
    <scope>GENOME REANNOTATION</scope>
    <source>
        <strain>cv. Nipponbare</strain>
    </source>
</reference>
<reference key="4">
    <citation type="journal article" date="2013" name="Rice">
        <title>Improvement of the Oryza sativa Nipponbare reference genome using next generation sequence and optical map data.</title>
        <authorList>
            <person name="Kawahara Y."/>
            <person name="de la Bastide M."/>
            <person name="Hamilton J.P."/>
            <person name="Kanamori H."/>
            <person name="McCombie W.R."/>
            <person name="Ouyang S."/>
            <person name="Schwartz D.C."/>
            <person name="Tanaka T."/>
            <person name="Wu J."/>
            <person name="Zhou S."/>
            <person name="Childs K.L."/>
            <person name="Davidson R.M."/>
            <person name="Lin H."/>
            <person name="Quesada-Ocampo L."/>
            <person name="Vaillancourt B."/>
            <person name="Sakai H."/>
            <person name="Lee S.S."/>
            <person name="Kim J."/>
            <person name="Numa H."/>
            <person name="Itoh T."/>
            <person name="Buell C.R."/>
            <person name="Matsumoto T."/>
        </authorList>
    </citation>
    <scope>GENOME REANNOTATION</scope>
    <source>
        <strain>cv. Nipponbare</strain>
    </source>
</reference>
<reference key="5">
    <citation type="journal article" date="2005" name="PLoS Biol.">
        <title>The genomes of Oryza sativa: a history of duplications.</title>
        <authorList>
            <person name="Yu J."/>
            <person name="Wang J."/>
            <person name="Lin W."/>
            <person name="Li S."/>
            <person name="Li H."/>
            <person name="Zhou J."/>
            <person name="Ni P."/>
            <person name="Dong W."/>
            <person name="Hu S."/>
            <person name="Zeng C."/>
            <person name="Zhang J."/>
            <person name="Zhang Y."/>
            <person name="Li R."/>
            <person name="Xu Z."/>
            <person name="Li S."/>
            <person name="Li X."/>
            <person name="Zheng H."/>
            <person name="Cong L."/>
            <person name="Lin L."/>
            <person name="Yin J."/>
            <person name="Geng J."/>
            <person name="Li G."/>
            <person name="Shi J."/>
            <person name="Liu J."/>
            <person name="Lv H."/>
            <person name="Li J."/>
            <person name="Wang J."/>
            <person name="Deng Y."/>
            <person name="Ran L."/>
            <person name="Shi X."/>
            <person name="Wang X."/>
            <person name="Wu Q."/>
            <person name="Li C."/>
            <person name="Ren X."/>
            <person name="Wang J."/>
            <person name="Wang X."/>
            <person name="Li D."/>
            <person name="Liu D."/>
            <person name="Zhang X."/>
            <person name="Ji Z."/>
            <person name="Zhao W."/>
            <person name="Sun Y."/>
            <person name="Zhang Z."/>
            <person name="Bao J."/>
            <person name="Han Y."/>
            <person name="Dong L."/>
            <person name="Ji J."/>
            <person name="Chen P."/>
            <person name="Wu S."/>
            <person name="Liu J."/>
            <person name="Xiao Y."/>
            <person name="Bu D."/>
            <person name="Tan J."/>
            <person name="Yang L."/>
            <person name="Ye C."/>
            <person name="Zhang J."/>
            <person name="Xu J."/>
            <person name="Zhou Y."/>
            <person name="Yu Y."/>
            <person name="Zhang B."/>
            <person name="Zhuang S."/>
            <person name="Wei H."/>
            <person name="Liu B."/>
            <person name="Lei M."/>
            <person name="Yu H."/>
            <person name="Li Y."/>
            <person name="Xu H."/>
            <person name="Wei S."/>
            <person name="He X."/>
            <person name="Fang L."/>
            <person name="Zhang Z."/>
            <person name="Zhang Y."/>
            <person name="Huang X."/>
            <person name="Su Z."/>
            <person name="Tong W."/>
            <person name="Li J."/>
            <person name="Tong Z."/>
            <person name="Li S."/>
            <person name="Ye J."/>
            <person name="Wang L."/>
            <person name="Fang L."/>
            <person name="Lei T."/>
            <person name="Chen C.-S."/>
            <person name="Chen H.-C."/>
            <person name="Xu Z."/>
            <person name="Li H."/>
            <person name="Huang H."/>
            <person name="Zhang F."/>
            <person name="Xu H."/>
            <person name="Li N."/>
            <person name="Zhao C."/>
            <person name="Li S."/>
            <person name="Dong L."/>
            <person name="Huang Y."/>
            <person name="Li L."/>
            <person name="Xi Y."/>
            <person name="Qi Q."/>
            <person name="Li W."/>
            <person name="Zhang B."/>
            <person name="Hu W."/>
            <person name="Zhang Y."/>
            <person name="Tian X."/>
            <person name="Jiao Y."/>
            <person name="Liang X."/>
            <person name="Jin J."/>
            <person name="Gao L."/>
            <person name="Zheng W."/>
            <person name="Hao B."/>
            <person name="Liu S.-M."/>
            <person name="Wang W."/>
            <person name="Yuan L."/>
            <person name="Cao M."/>
            <person name="McDermott J."/>
            <person name="Samudrala R."/>
            <person name="Wang J."/>
            <person name="Wong G.K.-S."/>
            <person name="Yang H."/>
        </authorList>
    </citation>
    <scope>NUCLEOTIDE SEQUENCE [LARGE SCALE GENOMIC DNA]</scope>
    <source>
        <strain>cv. Nipponbare</strain>
    </source>
</reference>
<reference key="6">
    <citation type="submission" date="2006-10" db="EMBL/GenBank/DDBJ databases">
        <title>Oryza sativa full length cDNA.</title>
        <authorList>
            <consortium name="The rice full-length cDNA consortium"/>
        </authorList>
    </citation>
    <scope>NUCLEOTIDE SEQUENCE [LARGE SCALE MRNA]</scope>
    <source>
        <strain>cv. Nipponbare</strain>
    </source>
</reference>
<name>PSA7B_ORYSJ</name>
<comment type="function">
    <text>The proteasome is a multicatalytic proteinase complex which is characterized by its ability to cleave peptides with Arg, Phe, Tyr, Leu, and Glu adjacent to the leaving group at neutral or slightly basic pH. The proteasome has an ATP-dependent proteolytic activity.</text>
</comment>
<comment type="subunit">
    <text>The 26S proteasome consists of a 20S proteasome core and two 19S regulatory subunits. The 20S proteasome core is composed of 28 subunits that are arranged in four stacked rings, resulting in a barrel-shaped structure. The two end rings are each formed by seven alpha subunits, and the two central rings are each formed by seven beta subunits. The catalytic chamber with the active sites is on the inside of the barrel.</text>
</comment>
<comment type="subcellular location">
    <subcellularLocation>
        <location evidence="1">Cytoplasm</location>
    </subcellularLocation>
    <subcellularLocation>
        <location evidence="1">Nucleus</location>
    </subcellularLocation>
</comment>
<comment type="similarity">
    <text evidence="2">Belongs to the peptidase T1A family.</text>
</comment>
<dbReference type="EMBL" id="AB032061">
    <property type="protein sequence ID" value="BAA99540.1"/>
    <property type="molecule type" value="mRNA"/>
</dbReference>
<dbReference type="EMBL" id="AP006067">
    <property type="protein sequence ID" value="BAD34241.1"/>
    <property type="molecule type" value="Genomic_DNA"/>
</dbReference>
<dbReference type="EMBL" id="AP006174">
    <property type="protein sequence ID" value="BAD34378.1"/>
    <property type="molecule type" value="Genomic_DNA"/>
</dbReference>
<dbReference type="EMBL" id="AP008215">
    <property type="protein sequence ID" value="BAF25709.1"/>
    <property type="molecule type" value="Genomic_DNA"/>
</dbReference>
<dbReference type="EMBL" id="AP014965">
    <property type="protein sequence ID" value="BAT09172.1"/>
    <property type="molecule type" value="Genomic_DNA"/>
</dbReference>
<dbReference type="EMBL" id="CM000146">
    <property type="protein sequence ID" value="EAZ45499.1"/>
    <property type="molecule type" value="Genomic_DNA"/>
</dbReference>
<dbReference type="EMBL" id="AK242072">
    <property type="protein sequence ID" value="BAH01187.1"/>
    <property type="molecule type" value="mRNA"/>
</dbReference>
<dbReference type="RefSeq" id="XP_015651315.1">
    <property type="nucleotide sequence ID" value="XM_015795829.1"/>
</dbReference>
<dbReference type="SMR" id="Q0J006"/>
<dbReference type="FunCoup" id="Q0J006">
    <property type="interactions" value="2641"/>
</dbReference>
<dbReference type="STRING" id="39947.Q0J006"/>
<dbReference type="PaxDb" id="39947-Q0J006"/>
<dbReference type="EnsemblPlants" id="Os09t0538200-01">
    <property type="protein sequence ID" value="Os09t0538200-01"/>
    <property type="gene ID" value="Os09g0538200"/>
</dbReference>
<dbReference type="Gramene" id="Os09t0538200-01">
    <property type="protein sequence ID" value="Os09t0538200-01"/>
    <property type="gene ID" value="Os09g0538200"/>
</dbReference>
<dbReference type="KEGG" id="dosa:Os09g0538200"/>
<dbReference type="eggNOG" id="KOG0183">
    <property type="taxonomic scope" value="Eukaryota"/>
</dbReference>
<dbReference type="HOGENOM" id="CLU_035750_4_0_1"/>
<dbReference type="InParanoid" id="Q0J006"/>
<dbReference type="OMA" id="AGTHSEW"/>
<dbReference type="OrthoDB" id="431557at2759"/>
<dbReference type="Proteomes" id="UP000000763">
    <property type="component" value="Chromosome 9"/>
</dbReference>
<dbReference type="Proteomes" id="UP000007752">
    <property type="component" value="Chromosome 9"/>
</dbReference>
<dbReference type="Proteomes" id="UP000059680">
    <property type="component" value="Chromosome 9"/>
</dbReference>
<dbReference type="GO" id="GO:0005737">
    <property type="term" value="C:cytoplasm"/>
    <property type="evidence" value="ECO:0007669"/>
    <property type="project" value="UniProtKB-SubCell"/>
</dbReference>
<dbReference type="GO" id="GO:0005634">
    <property type="term" value="C:nucleus"/>
    <property type="evidence" value="ECO:0000318"/>
    <property type="project" value="GO_Central"/>
</dbReference>
<dbReference type="GO" id="GO:0019773">
    <property type="term" value="C:proteasome core complex, alpha-subunit complex"/>
    <property type="evidence" value="ECO:0000250"/>
    <property type="project" value="UniProtKB"/>
</dbReference>
<dbReference type="GO" id="GO:0043161">
    <property type="term" value="P:proteasome-mediated ubiquitin-dependent protein catabolic process"/>
    <property type="evidence" value="ECO:0000318"/>
    <property type="project" value="GO_Central"/>
</dbReference>
<dbReference type="CDD" id="cd03755">
    <property type="entry name" value="proteasome_alpha_type_7"/>
    <property type="match status" value="1"/>
</dbReference>
<dbReference type="FunFam" id="3.60.20.10:FF:000004">
    <property type="entry name" value="Proteasome subunit alpha type-4"/>
    <property type="match status" value="1"/>
</dbReference>
<dbReference type="Gene3D" id="3.60.20.10">
    <property type="entry name" value="Glutamine Phosphoribosylpyrophosphate, subunit 1, domain 1"/>
    <property type="match status" value="1"/>
</dbReference>
<dbReference type="InterPro" id="IPR029055">
    <property type="entry name" value="Ntn_hydrolases_N"/>
</dbReference>
<dbReference type="InterPro" id="IPR050115">
    <property type="entry name" value="Proteasome_alpha"/>
</dbReference>
<dbReference type="InterPro" id="IPR023332">
    <property type="entry name" value="Proteasome_alpha-type"/>
</dbReference>
<dbReference type="InterPro" id="IPR000426">
    <property type="entry name" value="Proteasome_asu_N"/>
</dbReference>
<dbReference type="InterPro" id="IPR001353">
    <property type="entry name" value="Proteasome_sua/b"/>
</dbReference>
<dbReference type="NCBIfam" id="NF003075">
    <property type="entry name" value="PRK03996.1"/>
    <property type="match status" value="1"/>
</dbReference>
<dbReference type="PANTHER" id="PTHR11599">
    <property type="entry name" value="PROTEASOME SUBUNIT ALPHA/BETA"/>
    <property type="match status" value="1"/>
</dbReference>
<dbReference type="Pfam" id="PF00227">
    <property type="entry name" value="Proteasome"/>
    <property type="match status" value="1"/>
</dbReference>
<dbReference type="Pfam" id="PF10584">
    <property type="entry name" value="Proteasome_A_N"/>
    <property type="match status" value="1"/>
</dbReference>
<dbReference type="SMART" id="SM00948">
    <property type="entry name" value="Proteasome_A_N"/>
    <property type="match status" value="1"/>
</dbReference>
<dbReference type="SUPFAM" id="SSF56235">
    <property type="entry name" value="N-terminal nucleophile aminohydrolases (Ntn hydrolases)"/>
    <property type="match status" value="1"/>
</dbReference>
<dbReference type="PROSITE" id="PS00388">
    <property type="entry name" value="PROTEASOME_ALPHA_1"/>
    <property type="match status" value="1"/>
</dbReference>
<dbReference type="PROSITE" id="PS51475">
    <property type="entry name" value="PROTEASOME_ALPHA_2"/>
    <property type="match status" value="1"/>
</dbReference>